<sequence>MALKDTGSGGSTILPISEMVSASSSPGAPLAAAPGPCAPSPFPEVVELNVGGQVYVTKHSTLLSVPDSTLASMFSPSSPRGGARRRGDLPRDSRARFFIDRDGFLFRYVLDYLRDKQLALPEHFPEKERLLREAEFFQLTDLVKLLSPKVTKQNSLNDECCQSDLEDNVSQGSSDALLLRGAAAGAPSGSGAHGVSGVVGGGSAPDKRSGFLTLGYRGSYTTVRDNQADAKFRRVARIMVCGRIALAKEVFGDTLNESRDPDRQPEKYTSRFYLKFTYLEQAFDRLSEAGFHMVACNSSGTAAFVNQYRDDKIWSSYTEYIFFRPPQKIVSPKQEHEDRKRDKVTDKGSESGTSCNELSTSSCDSHSEASTPQDNPANTQQAAAHQPNTLTLDRPSRKAPVQWMPPPDKRRNSELFQSLISKSRETNLSKKKVCEKLSVEEEMKKCIQDFKKIHIPDCFPERKRQWQSELLQKYGL</sequence>
<organism>
    <name type="scientific">Mus musculus</name>
    <name type="common">Mouse</name>
    <dbReference type="NCBI Taxonomy" id="10090"/>
    <lineage>
        <taxon>Eukaryota</taxon>
        <taxon>Metazoa</taxon>
        <taxon>Chordata</taxon>
        <taxon>Craniata</taxon>
        <taxon>Vertebrata</taxon>
        <taxon>Euteleostomi</taxon>
        <taxon>Mammalia</taxon>
        <taxon>Eutheria</taxon>
        <taxon>Euarchontoglires</taxon>
        <taxon>Glires</taxon>
        <taxon>Rodentia</taxon>
        <taxon>Myomorpha</taxon>
        <taxon>Muroidea</taxon>
        <taxon>Muridae</taxon>
        <taxon>Murinae</taxon>
        <taxon>Mus</taxon>
        <taxon>Mus</taxon>
    </lineage>
</organism>
<name>KCTD8_MOUSE</name>
<keyword id="KW-0025">Alternative splicing</keyword>
<keyword id="KW-1003">Cell membrane</keyword>
<keyword id="KW-0966">Cell projection</keyword>
<keyword id="KW-0472">Membrane</keyword>
<keyword id="KW-0488">Methylation</keyword>
<keyword id="KW-0597">Phosphoprotein</keyword>
<keyword id="KW-0628">Postsynaptic cell membrane</keyword>
<keyword id="KW-1185">Reference proteome</keyword>
<keyword id="KW-0770">Synapse</keyword>
<reference key="1">
    <citation type="submission" date="2004-05" db="EMBL/GenBank/DDBJ databases">
        <title>Conserved paralogous segments on mouse chromosome 5 and 18.</title>
        <authorList>
            <person name="Odeh H.M."/>
            <person name="Mitchem K.L."/>
            <person name="Kohrman D.C."/>
        </authorList>
    </citation>
    <scope>NUCLEOTIDE SEQUENCE [MRNA] (ISOFORM 1)</scope>
    <source>
        <strain>C57BL/6J</strain>
    </source>
</reference>
<reference key="2">
    <citation type="journal article" date="2005" name="Science">
        <title>The transcriptional landscape of the mammalian genome.</title>
        <authorList>
            <person name="Carninci P."/>
            <person name="Kasukawa T."/>
            <person name="Katayama S."/>
            <person name="Gough J."/>
            <person name="Frith M.C."/>
            <person name="Maeda N."/>
            <person name="Oyama R."/>
            <person name="Ravasi T."/>
            <person name="Lenhard B."/>
            <person name="Wells C."/>
            <person name="Kodzius R."/>
            <person name="Shimokawa K."/>
            <person name="Bajic V.B."/>
            <person name="Brenner S.E."/>
            <person name="Batalov S."/>
            <person name="Forrest A.R."/>
            <person name="Zavolan M."/>
            <person name="Davis M.J."/>
            <person name="Wilming L.G."/>
            <person name="Aidinis V."/>
            <person name="Allen J.E."/>
            <person name="Ambesi-Impiombato A."/>
            <person name="Apweiler R."/>
            <person name="Aturaliya R.N."/>
            <person name="Bailey T.L."/>
            <person name="Bansal M."/>
            <person name="Baxter L."/>
            <person name="Beisel K.W."/>
            <person name="Bersano T."/>
            <person name="Bono H."/>
            <person name="Chalk A.M."/>
            <person name="Chiu K.P."/>
            <person name="Choudhary V."/>
            <person name="Christoffels A."/>
            <person name="Clutterbuck D.R."/>
            <person name="Crowe M.L."/>
            <person name="Dalla E."/>
            <person name="Dalrymple B.P."/>
            <person name="de Bono B."/>
            <person name="Della Gatta G."/>
            <person name="di Bernardo D."/>
            <person name="Down T."/>
            <person name="Engstrom P."/>
            <person name="Fagiolini M."/>
            <person name="Faulkner G."/>
            <person name="Fletcher C.F."/>
            <person name="Fukushima T."/>
            <person name="Furuno M."/>
            <person name="Futaki S."/>
            <person name="Gariboldi M."/>
            <person name="Georgii-Hemming P."/>
            <person name="Gingeras T.R."/>
            <person name="Gojobori T."/>
            <person name="Green R.E."/>
            <person name="Gustincich S."/>
            <person name="Harbers M."/>
            <person name="Hayashi Y."/>
            <person name="Hensch T.K."/>
            <person name="Hirokawa N."/>
            <person name="Hill D."/>
            <person name="Huminiecki L."/>
            <person name="Iacono M."/>
            <person name="Ikeo K."/>
            <person name="Iwama A."/>
            <person name="Ishikawa T."/>
            <person name="Jakt M."/>
            <person name="Kanapin A."/>
            <person name="Katoh M."/>
            <person name="Kawasawa Y."/>
            <person name="Kelso J."/>
            <person name="Kitamura H."/>
            <person name="Kitano H."/>
            <person name="Kollias G."/>
            <person name="Krishnan S.P."/>
            <person name="Kruger A."/>
            <person name="Kummerfeld S.K."/>
            <person name="Kurochkin I.V."/>
            <person name="Lareau L.F."/>
            <person name="Lazarevic D."/>
            <person name="Lipovich L."/>
            <person name="Liu J."/>
            <person name="Liuni S."/>
            <person name="McWilliam S."/>
            <person name="Madan Babu M."/>
            <person name="Madera M."/>
            <person name="Marchionni L."/>
            <person name="Matsuda H."/>
            <person name="Matsuzawa S."/>
            <person name="Miki H."/>
            <person name="Mignone F."/>
            <person name="Miyake S."/>
            <person name="Morris K."/>
            <person name="Mottagui-Tabar S."/>
            <person name="Mulder N."/>
            <person name="Nakano N."/>
            <person name="Nakauchi H."/>
            <person name="Ng P."/>
            <person name="Nilsson R."/>
            <person name="Nishiguchi S."/>
            <person name="Nishikawa S."/>
            <person name="Nori F."/>
            <person name="Ohara O."/>
            <person name="Okazaki Y."/>
            <person name="Orlando V."/>
            <person name="Pang K.C."/>
            <person name="Pavan W.J."/>
            <person name="Pavesi G."/>
            <person name="Pesole G."/>
            <person name="Petrovsky N."/>
            <person name="Piazza S."/>
            <person name="Reed J."/>
            <person name="Reid J.F."/>
            <person name="Ring B.Z."/>
            <person name="Ringwald M."/>
            <person name="Rost B."/>
            <person name="Ruan Y."/>
            <person name="Salzberg S.L."/>
            <person name="Sandelin A."/>
            <person name="Schneider C."/>
            <person name="Schoenbach C."/>
            <person name="Sekiguchi K."/>
            <person name="Semple C.A."/>
            <person name="Seno S."/>
            <person name="Sessa L."/>
            <person name="Sheng Y."/>
            <person name="Shibata Y."/>
            <person name="Shimada H."/>
            <person name="Shimada K."/>
            <person name="Silva D."/>
            <person name="Sinclair B."/>
            <person name="Sperling S."/>
            <person name="Stupka E."/>
            <person name="Sugiura K."/>
            <person name="Sultana R."/>
            <person name="Takenaka Y."/>
            <person name="Taki K."/>
            <person name="Tammoja K."/>
            <person name="Tan S.L."/>
            <person name="Tang S."/>
            <person name="Taylor M.S."/>
            <person name="Tegner J."/>
            <person name="Teichmann S.A."/>
            <person name="Ueda H.R."/>
            <person name="van Nimwegen E."/>
            <person name="Verardo R."/>
            <person name="Wei C.L."/>
            <person name="Yagi K."/>
            <person name="Yamanishi H."/>
            <person name="Zabarovsky E."/>
            <person name="Zhu S."/>
            <person name="Zimmer A."/>
            <person name="Hide W."/>
            <person name="Bult C."/>
            <person name="Grimmond S.M."/>
            <person name="Teasdale R.D."/>
            <person name="Liu E.T."/>
            <person name="Brusic V."/>
            <person name="Quackenbush J."/>
            <person name="Wahlestedt C."/>
            <person name="Mattick J.S."/>
            <person name="Hume D.A."/>
            <person name="Kai C."/>
            <person name="Sasaki D."/>
            <person name="Tomaru Y."/>
            <person name="Fukuda S."/>
            <person name="Kanamori-Katayama M."/>
            <person name="Suzuki M."/>
            <person name="Aoki J."/>
            <person name="Arakawa T."/>
            <person name="Iida J."/>
            <person name="Imamura K."/>
            <person name="Itoh M."/>
            <person name="Kato T."/>
            <person name="Kawaji H."/>
            <person name="Kawagashira N."/>
            <person name="Kawashima T."/>
            <person name="Kojima M."/>
            <person name="Kondo S."/>
            <person name="Konno H."/>
            <person name="Nakano K."/>
            <person name="Ninomiya N."/>
            <person name="Nishio T."/>
            <person name="Okada M."/>
            <person name="Plessy C."/>
            <person name="Shibata K."/>
            <person name="Shiraki T."/>
            <person name="Suzuki S."/>
            <person name="Tagami M."/>
            <person name="Waki K."/>
            <person name="Watahiki A."/>
            <person name="Okamura-Oho Y."/>
            <person name="Suzuki H."/>
            <person name="Kawai J."/>
            <person name="Hayashizaki Y."/>
        </authorList>
    </citation>
    <scope>NUCLEOTIDE SEQUENCE [LARGE SCALE MRNA] (ISOFORMS 1 AND 2)</scope>
    <source>
        <strain>C57BL/6J</strain>
        <tissue>Cerebellum</tissue>
        <tissue>Corpora quadrigemina</tissue>
        <tissue>Hypothalamus</tissue>
    </source>
</reference>
<reference key="3">
    <citation type="journal article" date="2004" name="Genome Res.">
        <title>The status, quality, and expansion of the NIH full-length cDNA project: the Mammalian Gene Collection (MGC).</title>
        <authorList>
            <consortium name="The MGC Project Team"/>
        </authorList>
    </citation>
    <scope>NUCLEOTIDE SEQUENCE [LARGE SCALE MRNA] (ISOFORM 1)</scope>
    <source>
        <tissue>Brain</tissue>
    </source>
</reference>
<reference key="4">
    <citation type="journal article" date="2010" name="Cell">
        <title>A tissue-specific atlas of mouse protein phosphorylation and expression.</title>
        <authorList>
            <person name="Huttlin E.L."/>
            <person name="Jedrychowski M.P."/>
            <person name="Elias J.E."/>
            <person name="Goswami T."/>
            <person name="Rad R."/>
            <person name="Beausoleil S.A."/>
            <person name="Villen J."/>
            <person name="Haas W."/>
            <person name="Sowa M.E."/>
            <person name="Gygi S.P."/>
        </authorList>
    </citation>
    <scope>PHOSPHORYLATION [LARGE SCALE ANALYSIS] AT SER-78 AND SER-413</scope>
    <scope>IDENTIFICATION BY MASS SPECTROMETRY [LARGE SCALE ANALYSIS]</scope>
    <source>
        <tissue>Brain</tissue>
        <tissue>Kidney</tissue>
        <tissue>Lung</tissue>
    </source>
</reference>
<reference key="5">
    <citation type="journal article" date="2010" name="Nature">
        <title>Native GABA(B) receptors are heteromultimers with a family of auxiliary subunits.</title>
        <authorList>
            <person name="Schwenk J."/>
            <person name="Metz M."/>
            <person name="Zolles G."/>
            <person name="Turecek R."/>
            <person name="Fritzius T."/>
            <person name="Bildl W."/>
            <person name="Tarusawa E."/>
            <person name="Kulik A."/>
            <person name="Unger A."/>
            <person name="Ivankova K."/>
            <person name="Seddik R."/>
            <person name="Tiao J.Y."/>
            <person name="Rajalu M."/>
            <person name="Trojanova J."/>
            <person name="Rohde V."/>
            <person name="Gassmann M."/>
            <person name="Schulte U."/>
            <person name="Fakler B."/>
            <person name="Bettler B."/>
        </authorList>
    </citation>
    <scope>FUNCTION</scope>
    <scope>INTERACTION WITH GABBR1 AND GABBR2</scope>
    <scope>TETRAMERIZATION</scope>
</reference>
<reference key="6">
    <citation type="journal article" date="2014" name="Mol. Cell. Proteomics">
        <title>Immunoaffinity enrichment and mass spectrometry analysis of protein methylation.</title>
        <authorList>
            <person name="Guo A."/>
            <person name="Gu H."/>
            <person name="Zhou J."/>
            <person name="Mulhern D."/>
            <person name="Wang Y."/>
            <person name="Lee K.A."/>
            <person name="Yang V."/>
            <person name="Aguiar M."/>
            <person name="Kornhauser J."/>
            <person name="Jia X."/>
            <person name="Ren J."/>
            <person name="Beausoleil S.A."/>
            <person name="Silva J.C."/>
            <person name="Vemulapalli V."/>
            <person name="Bedford M.T."/>
            <person name="Comb M.J."/>
        </authorList>
    </citation>
    <scope>METHYLATION [LARGE SCALE ANALYSIS] AT ARG-80</scope>
    <scope>IDENTIFICATION BY MASS SPECTROMETRY [LARGE SCALE ANALYSIS]</scope>
    <source>
        <tissue>Brain</tissue>
    </source>
</reference>
<feature type="chain" id="PRO_0000251482" description="BTB/POZ domain-containing protein KCTD8">
    <location>
        <begin position="1"/>
        <end position="476"/>
    </location>
</feature>
<feature type="domain" description="BTB">
    <location>
        <begin position="44"/>
        <end position="122"/>
    </location>
</feature>
<feature type="region of interest" description="Disordered" evidence="2">
    <location>
        <begin position="331"/>
        <end position="412"/>
    </location>
</feature>
<feature type="compositionally biased region" description="Basic and acidic residues" evidence="2">
    <location>
        <begin position="333"/>
        <end position="349"/>
    </location>
</feature>
<feature type="compositionally biased region" description="Polar residues" evidence="2">
    <location>
        <begin position="350"/>
        <end position="391"/>
    </location>
</feature>
<feature type="modified residue" description="Phosphoserine" evidence="6">
    <location>
        <position position="78"/>
    </location>
</feature>
<feature type="modified residue" description="Omega-N-methylarginine" evidence="7">
    <location>
        <position position="80"/>
    </location>
</feature>
<feature type="modified residue" description="Phosphoserine" evidence="6">
    <location>
        <position position="413"/>
    </location>
</feature>
<feature type="splice variant" id="VSP_020761" description="In isoform 2." evidence="4">
    <original>PPQKIVSPKQEHEDRKRDKVTD</original>
    <variation>KETAQRNCFSHFIHHMRVDGKA</variation>
    <location>
        <begin position="325"/>
        <end position="346"/>
    </location>
</feature>
<feature type="splice variant" id="VSP_020762" description="In isoform 2." evidence="4">
    <location>
        <begin position="347"/>
        <end position="476"/>
    </location>
</feature>
<feature type="sequence conflict" description="In Ref. 2; BAC31296." evidence="5" ref="2">
    <original>V</original>
    <variation>I</variation>
    <location>
        <position position="45"/>
    </location>
</feature>
<feature type="sequence conflict" description="In Ref. 2; BAC31296." evidence="5" ref="2">
    <original>GA</original>
    <variation>RAP</variation>
    <location>
        <begin position="82"/>
        <end position="83"/>
    </location>
</feature>
<feature type="sequence conflict" description="In Ref. 2; BAC38532." evidence="5" ref="2">
    <original>K</original>
    <variation>E</variation>
    <location>
        <position position="149"/>
    </location>
</feature>
<feature type="sequence conflict" description="In Ref. 2; BAC30262." evidence="5" ref="2">
    <original>E</original>
    <variation>K</variation>
    <location>
        <position position="159"/>
    </location>
</feature>
<feature type="sequence conflict" description="In Ref. 2; BAC32368." evidence="5" ref="2">
    <original>D</original>
    <variation>Y</variation>
    <location>
        <position position="206"/>
    </location>
</feature>
<feature type="sequence conflict" description="In Ref. 2; BAC32368." evidence="5" ref="2">
    <original>S</original>
    <variation>Y</variation>
    <location>
        <position position="359"/>
    </location>
</feature>
<feature type="sequence conflict" description="In Ref. 2; BAC31527." evidence="5" ref="2">
    <original>N</original>
    <variation>K</variation>
    <location>
        <position position="412"/>
    </location>
</feature>
<evidence type="ECO:0000250" key="1"/>
<evidence type="ECO:0000256" key="2">
    <source>
        <dbReference type="SAM" id="MobiDB-lite"/>
    </source>
</evidence>
<evidence type="ECO:0000269" key="3">
    <source>
    </source>
</evidence>
<evidence type="ECO:0000303" key="4">
    <source>
    </source>
</evidence>
<evidence type="ECO:0000305" key="5"/>
<evidence type="ECO:0007744" key="6">
    <source>
    </source>
</evidence>
<evidence type="ECO:0007744" key="7">
    <source>
    </source>
</evidence>
<dbReference type="EMBL" id="AY615967">
    <property type="protein sequence ID" value="AAU25822.1"/>
    <property type="molecule type" value="mRNA"/>
</dbReference>
<dbReference type="EMBL" id="AK039167">
    <property type="protein sequence ID" value="BAC30262.2"/>
    <property type="molecule type" value="mRNA"/>
</dbReference>
<dbReference type="EMBL" id="AK042569">
    <property type="protein sequence ID" value="BAC31296.1"/>
    <property type="molecule type" value="mRNA"/>
</dbReference>
<dbReference type="EMBL" id="AK043351">
    <property type="protein sequence ID" value="BAC31527.1"/>
    <property type="molecule type" value="mRNA"/>
</dbReference>
<dbReference type="EMBL" id="AK045439">
    <property type="protein sequence ID" value="BAC32368.1"/>
    <property type="molecule type" value="mRNA"/>
</dbReference>
<dbReference type="EMBL" id="AK082563">
    <property type="protein sequence ID" value="BAC38532.1"/>
    <property type="molecule type" value="mRNA"/>
</dbReference>
<dbReference type="EMBL" id="BC116940">
    <property type="protein sequence ID" value="AAI16941.1"/>
    <property type="molecule type" value="mRNA"/>
</dbReference>
<dbReference type="EMBL" id="BC116942">
    <property type="protein sequence ID" value="AAI16943.1"/>
    <property type="molecule type" value="mRNA"/>
</dbReference>
<dbReference type="CCDS" id="CCDS19320.1">
    <molecule id="Q50H33-1"/>
</dbReference>
<dbReference type="RefSeq" id="NP_780728.3">
    <molecule id="Q50H33-1"/>
    <property type="nucleotide sequence ID" value="NM_175519.5"/>
</dbReference>
<dbReference type="SMR" id="Q50H33"/>
<dbReference type="BioGRID" id="232480">
    <property type="interactions" value="4"/>
</dbReference>
<dbReference type="CORUM" id="Q50H33"/>
<dbReference type="FunCoup" id="Q50H33">
    <property type="interactions" value="88"/>
</dbReference>
<dbReference type="IntAct" id="Q50H33">
    <property type="interactions" value="1"/>
</dbReference>
<dbReference type="MINT" id="Q50H33"/>
<dbReference type="STRING" id="10090.ENSMUSP00000055326"/>
<dbReference type="ChEMBL" id="CHEMBL4523317"/>
<dbReference type="GlyGen" id="Q50H33">
    <property type="glycosylation" value="1 site, 1 O-linked glycan (1 site)"/>
</dbReference>
<dbReference type="iPTMnet" id="Q50H33"/>
<dbReference type="PhosphoSitePlus" id="Q50H33"/>
<dbReference type="PaxDb" id="10090-ENSMUSP00000055326"/>
<dbReference type="PeptideAtlas" id="Q50H33"/>
<dbReference type="ProteomicsDB" id="263513">
    <molecule id="Q50H33-1"/>
</dbReference>
<dbReference type="ProteomicsDB" id="263514">
    <molecule id="Q50H33-2"/>
</dbReference>
<dbReference type="Antibodypedia" id="23721">
    <property type="antibodies" value="76 antibodies from 15 providers"/>
</dbReference>
<dbReference type="DNASU" id="243043"/>
<dbReference type="Ensembl" id="ENSMUST00000054095.6">
    <molecule id="Q50H33-1"/>
    <property type="protein sequence ID" value="ENSMUSP00000055326.5"/>
    <property type="gene ID" value="ENSMUSG00000037653.8"/>
</dbReference>
<dbReference type="Ensembl" id="ENSMUST00000087231.4">
    <molecule id="Q50H33-2"/>
    <property type="protein sequence ID" value="ENSMUSP00000084484.3"/>
    <property type="gene ID" value="ENSMUSG00000037653.8"/>
</dbReference>
<dbReference type="GeneID" id="243043"/>
<dbReference type="KEGG" id="mmu:243043"/>
<dbReference type="UCSC" id="uc008xqj.1">
    <molecule id="Q50H33-1"/>
    <property type="organism name" value="mouse"/>
</dbReference>
<dbReference type="AGR" id="MGI:2443804"/>
<dbReference type="CTD" id="386617"/>
<dbReference type="MGI" id="MGI:2443804">
    <property type="gene designation" value="Kctd8"/>
</dbReference>
<dbReference type="VEuPathDB" id="HostDB:ENSMUSG00000037653"/>
<dbReference type="eggNOG" id="KOG2723">
    <property type="taxonomic scope" value="Eukaryota"/>
</dbReference>
<dbReference type="GeneTree" id="ENSGT00940000161041"/>
<dbReference type="HOGENOM" id="CLU_057051_1_0_1"/>
<dbReference type="InParanoid" id="Q50H33"/>
<dbReference type="OMA" id="DNPPNAQ"/>
<dbReference type="OrthoDB" id="2414723at2759"/>
<dbReference type="PhylomeDB" id="Q50H33"/>
<dbReference type="TreeFam" id="TF315332"/>
<dbReference type="BioGRID-ORCS" id="243043">
    <property type="hits" value="1 hit in 78 CRISPR screens"/>
</dbReference>
<dbReference type="CD-CODE" id="CE726F99">
    <property type="entry name" value="Postsynaptic density"/>
</dbReference>
<dbReference type="ChiTaRS" id="Kctd8">
    <property type="organism name" value="mouse"/>
</dbReference>
<dbReference type="PRO" id="PR:Q50H33"/>
<dbReference type="Proteomes" id="UP000000589">
    <property type="component" value="Chromosome 5"/>
</dbReference>
<dbReference type="RNAct" id="Q50H33">
    <property type="molecule type" value="protein"/>
</dbReference>
<dbReference type="Bgee" id="ENSMUSG00000037653">
    <property type="expression patterns" value="Expressed in habenula and 97 other cell types or tissues"/>
</dbReference>
<dbReference type="GO" id="GO:0042995">
    <property type="term" value="C:cell projection"/>
    <property type="evidence" value="ECO:0007669"/>
    <property type="project" value="UniProtKB-KW"/>
</dbReference>
<dbReference type="GO" id="GO:0098794">
    <property type="term" value="C:postsynapse"/>
    <property type="evidence" value="ECO:0000314"/>
    <property type="project" value="SynGO"/>
</dbReference>
<dbReference type="GO" id="GO:0045211">
    <property type="term" value="C:postsynaptic membrane"/>
    <property type="evidence" value="ECO:0007669"/>
    <property type="project" value="UniProtKB-SubCell"/>
</dbReference>
<dbReference type="GO" id="GO:0048787">
    <property type="term" value="C:presynaptic active zone membrane"/>
    <property type="evidence" value="ECO:0000314"/>
    <property type="project" value="SynGO"/>
</dbReference>
<dbReference type="GO" id="GO:0042734">
    <property type="term" value="C:presynaptic membrane"/>
    <property type="evidence" value="ECO:0000314"/>
    <property type="project" value="SynGO"/>
</dbReference>
<dbReference type="GO" id="GO:0043235">
    <property type="term" value="C:receptor complex"/>
    <property type="evidence" value="ECO:0000314"/>
    <property type="project" value="MGI"/>
</dbReference>
<dbReference type="GO" id="GO:0051260">
    <property type="term" value="P:protein homooligomerization"/>
    <property type="evidence" value="ECO:0007669"/>
    <property type="project" value="InterPro"/>
</dbReference>
<dbReference type="GO" id="GO:0008277">
    <property type="term" value="P:regulation of G protein-coupled receptor signaling pathway"/>
    <property type="evidence" value="ECO:0000316"/>
    <property type="project" value="MGI"/>
</dbReference>
<dbReference type="CDD" id="cd18396">
    <property type="entry name" value="BTB_POZ_KCTD8"/>
    <property type="match status" value="1"/>
</dbReference>
<dbReference type="CDD" id="cd22218">
    <property type="entry name" value="H1_KCTD8"/>
    <property type="match status" value="1"/>
</dbReference>
<dbReference type="FunFam" id="3.30.710.10:FF:000031">
    <property type="entry name" value="BTB/POZ domain-containing protein KCTD16"/>
    <property type="match status" value="1"/>
</dbReference>
<dbReference type="Gene3D" id="3.30.710.10">
    <property type="entry name" value="Potassium Channel Kv1.1, Chain A"/>
    <property type="match status" value="1"/>
</dbReference>
<dbReference type="InterPro" id="IPR000210">
    <property type="entry name" value="BTB/POZ_dom"/>
</dbReference>
<dbReference type="InterPro" id="IPR049904">
    <property type="entry name" value="H1_KCTD8"/>
</dbReference>
<dbReference type="InterPro" id="IPR011333">
    <property type="entry name" value="SKP1/BTB/POZ_sf"/>
</dbReference>
<dbReference type="InterPro" id="IPR003131">
    <property type="entry name" value="T1-type_BTB"/>
</dbReference>
<dbReference type="PANTHER" id="PTHR14499:SF68">
    <property type="entry name" value="BTB_POZ DOMAIN-CONTAINING PROTEIN KCTD8"/>
    <property type="match status" value="1"/>
</dbReference>
<dbReference type="PANTHER" id="PTHR14499">
    <property type="entry name" value="POTASSIUM CHANNEL TETRAMERIZATION DOMAIN-CONTAINING"/>
    <property type="match status" value="1"/>
</dbReference>
<dbReference type="Pfam" id="PF02214">
    <property type="entry name" value="BTB_2"/>
    <property type="match status" value="1"/>
</dbReference>
<dbReference type="Pfam" id="PF23110">
    <property type="entry name" value="H1_KCTD8_12_16"/>
    <property type="match status" value="1"/>
</dbReference>
<dbReference type="SMART" id="SM00225">
    <property type="entry name" value="BTB"/>
    <property type="match status" value="1"/>
</dbReference>
<dbReference type="SUPFAM" id="SSF54695">
    <property type="entry name" value="POZ domain"/>
    <property type="match status" value="1"/>
</dbReference>
<comment type="function">
    <text evidence="3">Auxiliary subunit of GABA-B receptors that determine the pharmacology and kinetics of the receptor response. Increases agonist potency and markedly alter the G-protein signaling of the receptors by accelerating onset and promoting desensitization.</text>
</comment>
<comment type="subunit">
    <text evidence="3">Interacts as a tetramer with GABBR1 and GABBR2.</text>
</comment>
<comment type="subcellular location">
    <subcellularLocation>
        <location evidence="1">Presynaptic cell membrane</location>
    </subcellularLocation>
    <subcellularLocation>
        <location evidence="1">Postsynaptic cell membrane</location>
    </subcellularLocation>
</comment>
<comment type="alternative products">
    <event type="alternative splicing"/>
    <isoform>
        <id>Q50H33-1</id>
        <name>1</name>
        <sequence type="displayed"/>
    </isoform>
    <isoform>
        <id>Q50H33-2</id>
        <name>2</name>
        <sequence type="described" ref="VSP_020761 VSP_020762"/>
    </isoform>
</comment>
<gene>
    <name type="primary">Kctd8</name>
</gene>
<accession>Q50H33</accession>
<accession>Q8BR74</accession>
<accession>Q8C4C2</accession>
<accession>Q8C906</accession>
<accession>Q8C9B0</accession>
<accession>Q8CAA9</accession>
<protein>
    <recommendedName>
        <fullName>BTB/POZ domain-containing protein KCTD8</fullName>
    </recommendedName>
</protein>
<proteinExistence type="evidence at protein level"/>